<dbReference type="EC" id="4.2.1.8" evidence="1"/>
<dbReference type="EMBL" id="BA000016">
    <property type="protein sequence ID" value="BAB79857.1"/>
    <property type="molecule type" value="Genomic_DNA"/>
</dbReference>
<dbReference type="RefSeq" id="WP_011009639.1">
    <property type="nucleotide sequence ID" value="NC_003366.1"/>
</dbReference>
<dbReference type="SMR" id="Q8XP15"/>
<dbReference type="STRING" id="195102.gene:10489395"/>
<dbReference type="KEGG" id="cpe:CPE0151"/>
<dbReference type="HOGENOM" id="CLU_058621_1_0_9"/>
<dbReference type="UniPathway" id="UPA00246"/>
<dbReference type="Proteomes" id="UP000000818">
    <property type="component" value="Chromosome"/>
</dbReference>
<dbReference type="GO" id="GO:0008198">
    <property type="term" value="F:ferrous iron binding"/>
    <property type="evidence" value="ECO:0007669"/>
    <property type="project" value="TreeGrafter"/>
</dbReference>
<dbReference type="GO" id="GO:0030145">
    <property type="term" value="F:manganese ion binding"/>
    <property type="evidence" value="ECO:0007669"/>
    <property type="project" value="TreeGrafter"/>
</dbReference>
<dbReference type="GO" id="GO:0008927">
    <property type="term" value="F:mannonate dehydratase activity"/>
    <property type="evidence" value="ECO:0007669"/>
    <property type="project" value="UniProtKB-UniRule"/>
</dbReference>
<dbReference type="GO" id="GO:0042840">
    <property type="term" value="P:D-glucuronate catabolic process"/>
    <property type="evidence" value="ECO:0007669"/>
    <property type="project" value="TreeGrafter"/>
</dbReference>
<dbReference type="Gene3D" id="3.20.20.150">
    <property type="entry name" value="Divalent-metal-dependent TIM barrel enzymes"/>
    <property type="match status" value="1"/>
</dbReference>
<dbReference type="HAMAP" id="MF_00106">
    <property type="entry name" value="UxuA"/>
    <property type="match status" value="1"/>
</dbReference>
<dbReference type="InterPro" id="IPR004628">
    <property type="entry name" value="Man_deHydtase"/>
</dbReference>
<dbReference type="InterPro" id="IPR036237">
    <property type="entry name" value="Xyl_isomerase-like_sf"/>
</dbReference>
<dbReference type="NCBIfam" id="NF003027">
    <property type="entry name" value="PRK03906.1"/>
    <property type="match status" value="2"/>
</dbReference>
<dbReference type="NCBIfam" id="TIGR00695">
    <property type="entry name" value="uxuA"/>
    <property type="match status" value="2"/>
</dbReference>
<dbReference type="PANTHER" id="PTHR30387">
    <property type="entry name" value="MANNONATE DEHYDRATASE"/>
    <property type="match status" value="1"/>
</dbReference>
<dbReference type="PANTHER" id="PTHR30387:SF2">
    <property type="entry name" value="MANNONATE DEHYDRATASE"/>
    <property type="match status" value="1"/>
</dbReference>
<dbReference type="Pfam" id="PF03786">
    <property type="entry name" value="UxuA"/>
    <property type="match status" value="1"/>
</dbReference>
<dbReference type="PIRSF" id="PIRSF016049">
    <property type="entry name" value="Man_dehyd"/>
    <property type="match status" value="1"/>
</dbReference>
<dbReference type="SUPFAM" id="SSF51658">
    <property type="entry name" value="Xylose isomerase-like"/>
    <property type="match status" value="1"/>
</dbReference>
<proteinExistence type="inferred from homology"/>
<name>UXUA_CLOPE</name>
<reference key="1">
    <citation type="journal article" date="2002" name="Proc. Natl. Acad. Sci. U.S.A.">
        <title>Complete genome sequence of Clostridium perfringens, an anaerobic flesh-eater.</title>
        <authorList>
            <person name="Shimizu T."/>
            <person name="Ohtani K."/>
            <person name="Hirakawa H."/>
            <person name="Ohshima K."/>
            <person name="Yamashita A."/>
            <person name="Shiba T."/>
            <person name="Ogasawara N."/>
            <person name="Hattori M."/>
            <person name="Kuhara S."/>
            <person name="Hayashi H."/>
        </authorList>
    </citation>
    <scope>NUCLEOTIDE SEQUENCE [LARGE SCALE GENOMIC DNA]</scope>
    <source>
        <strain>13 / Type A</strain>
    </source>
</reference>
<comment type="function">
    <text evidence="1">Catalyzes the dehydration of D-mannonate.</text>
</comment>
<comment type="catalytic activity">
    <reaction evidence="1">
        <text>D-mannonate = 2-dehydro-3-deoxy-D-gluconate + H2O</text>
        <dbReference type="Rhea" id="RHEA:20097"/>
        <dbReference type="ChEBI" id="CHEBI:15377"/>
        <dbReference type="ChEBI" id="CHEBI:17767"/>
        <dbReference type="ChEBI" id="CHEBI:57990"/>
        <dbReference type="EC" id="4.2.1.8"/>
    </reaction>
</comment>
<comment type="cofactor">
    <cofactor evidence="1">
        <name>Fe(2+)</name>
        <dbReference type="ChEBI" id="CHEBI:29033"/>
    </cofactor>
    <cofactor evidence="1">
        <name>Mn(2+)</name>
        <dbReference type="ChEBI" id="CHEBI:29035"/>
    </cofactor>
</comment>
<comment type="pathway">
    <text evidence="1">Carbohydrate metabolism; pentose and glucuronate interconversion.</text>
</comment>
<comment type="similarity">
    <text evidence="1">Belongs to the mannonate dehydratase family.</text>
</comment>
<feature type="chain" id="PRO_0000170669" description="Mannonate dehydratase">
    <location>
        <begin position="1"/>
        <end position="350"/>
    </location>
</feature>
<gene>
    <name evidence="1" type="primary">uxuA</name>
    <name type="ordered locus">CPE0151</name>
</gene>
<protein>
    <recommendedName>
        <fullName evidence="1">Mannonate dehydratase</fullName>
        <ecNumber evidence="1">4.2.1.8</ecNumber>
    </recommendedName>
    <alternativeName>
        <fullName evidence="1">D-mannonate hydro-lyase</fullName>
    </alternativeName>
</protein>
<keyword id="KW-0408">Iron</keyword>
<keyword id="KW-0456">Lyase</keyword>
<keyword id="KW-0464">Manganese</keyword>
<keyword id="KW-1185">Reference proteome</keyword>
<organism>
    <name type="scientific">Clostridium perfringens (strain 13 / Type A)</name>
    <dbReference type="NCBI Taxonomy" id="195102"/>
    <lineage>
        <taxon>Bacteria</taxon>
        <taxon>Bacillati</taxon>
        <taxon>Bacillota</taxon>
        <taxon>Clostridia</taxon>
        <taxon>Eubacteriales</taxon>
        <taxon>Clostridiaceae</taxon>
        <taxon>Clostridium</taxon>
    </lineage>
</organism>
<accession>Q8XP15</accession>
<evidence type="ECO:0000255" key="1">
    <source>
        <dbReference type="HAMAP-Rule" id="MF_00106"/>
    </source>
</evidence>
<sequence>MEMTFRWYGKDDPVKLEYIKQIPGMKGIVTAIYDIPVGEVWPLERILELKKEIESHGLKLSVIESVPVHEDIKLGLPTRDRYIDNYIQTIRNLAEAGVDTICYNFMPVFDWTRSDLNYKLEDGSTCLIYDEEQVKKMDPALGELELPGWDTSYGEGGLKGLLEQYKDIDEEILWSNLNYFIQRIMKVADKVRMKMAIHPDDPPWGIFGLPRIITNFDNLKRFIDLYDSPYHGITLCTGSLGCTKVNDMVQMINYFGKERNRIHFAHLRNVKITGDSSFNEVAHLSEAGSLDFYEIVKAYCDYDFAGPYRPDHGRMIWGETGRPGYGLYDRALGAVYINGLIEAIKKNKKN</sequence>